<name>HUTI_RHIWR</name>
<organism>
    <name type="scientific">Rhizorhabdus wittichii (strain DSM 6014 / CCUG 31198 / JCM 15750 / NBRC 105917 / EY 4224 / RW1)</name>
    <name type="common">Sphingomonas wittichii</name>
    <dbReference type="NCBI Taxonomy" id="392499"/>
    <lineage>
        <taxon>Bacteria</taxon>
        <taxon>Pseudomonadati</taxon>
        <taxon>Pseudomonadota</taxon>
        <taxon>Alphaproteobacteria</taxon>
        <taxon>Sphingomonadales</taxon>
        <taxon>Sphingomonadaceae</taxon>
        <taxon>Rhizorhabdus</taxon>
    </lineage>
</organism>
<proteinExistence type="inferred from homology"/>
<feature type="chain" id="PRO_1000072127" description="Imidazolonepropionase">
    <location>
        <begin position="1"/>
        <end position="399"/>
    </location>
</feature>
<feature type="binding site" evidence="1">
    <location>
        <position position="68"/>
    </location>
    <ligand>
        <name>Fe(3+)</name>
        <dbReference type="ChEBI" id="CHEBI:29034"/>
    </ligand>
</feature>
<feature type="binding site" evidence="1">
    <location>
        <position position="68"/>
    </location>
    <ligand>
        <name>Zn(2+)</name>
        <dbReference type="ChEBI" id="CHEBI:29105"/>
    </ligand>
</feature>
<feature type="binding site" evidence="1">
    <location>
        <position position="70"/>
    </location>
    <ligand>
        <name>Fe(3+)</name>
        <dbReference type="ChEBI" id="CHEBI:29034"/>
    </ligand>
</feature>
<feature type="binding site" evidence="1">
    <location>
        <position position="70"/>
    </location>
    <ligand>
        <name>Zn(2+)</name>
        <dbReference type="ChEBI" id="CHEBI:29105"/>
    </ligand>
</feature>
<feature type="binding site" evidence="1">
    <location>
        <position position="77"/>
    </location>
    <ligand>
        <name>4-imidazolone-5-propanoate</name>
        <dbReference type="ChEBI" id="CHEBI:77893"/>
    </ligand>
</feature>
<feature type="binding site" evidence="1">
    <location>
        <position position="140"/>
    </location>
    <ligand>
        <name>4-imidazolone-5-propanoate</name>
        <dbReference type="ChEBI" id="CHEBI:77893"/>
    </ligand>
</feature>
<feature type="binding site" evidence="1">
    <location>
        <position position="140"/>
    </location>
    <ligand>
        <name>N-formimidoyl-L-glutamate</name>
        <dbReference type="ChEBI" id="CHEBI:58928"/>
    </ligand>
</feature>
<feature type="binding site" evidence="1">
    <location>
        <position position="173"/>
    </location>
    <ligand>
        <name>4-imidazolone-5-propanoate</name>
        <dbReference type="ChEBI" id="CHEBI:77893"/>
    </ligand>
</feature>
<feature type="binding site" evidence="1">
    <location>
        <position position="238"/>
    </location>
    <ligand>
        <name>Fe(3+)</name>
        <dbReference type="ChEBI" id="CHEBI:29034"/>
    </ligand>
</feature>
<feature type="binding site" evidence="1">
    <location>
        <position position="238"/>
    </location>
    <ligand>
        <name>Zn(2+)</name>
        <dbReference type="ChEBI" id="CHEBI:29105"/>
    </ligand>
</feature>
<feature type="binding site" evidence="1">
    <location>
        <position position="241"/>
    </location>
    <ligand>
        <name>4-imidazolone-5-propanoate</name>
        <dbReference type="ChEBI" id="CHEBI:77893"/>
    </ligand>
</feature>
<feature type="binding site" evidence="1">
    <location>
        <position position="313"/>
    </location>
    <ligand>
        <name>Fe(3+)</name>
        <dbReference type="ChEBI" id="CHEBI:29034"/>
    </ligand>
</feature>
<feature type="binding site" evidence="1">
    <location>
        <position position="313"/>
    </location>
    <ligand>
        <name>Zn(2+)</name>
        <dbReference type="ChEBI" id="CHEBI:29105"/>
    </ligand>
</feature>
<feature type="binding site" evidence="1">
    <location>
        <position position="315"/>
    </location>
    <ligand>
        <name>N-formimidoyl-L-glutamate</name>
        <dbReference type="ChEBI" id="CHEBI:58928"/>
    </ligand>
</feature>
<feature type="binding site" evidence="1">
    <location>
        <position position="317"/>
    </location>
    <ligand>
        <name>N-formimidoyl-L-glutamate</name>
        <dbReference type="ChEBI" id="CHEBI:58928"/>
    </ligand>
</feature>
<feature type="binding site" evidence="1">
    <location>
        <position position="318"/>
    </location>
    <ligand>
        <name>4-imidazolone-5-propanoate</name>
        <dbReference type="ChEBI" id="CHEBI:77893"/>
    </ligand>
</feature>
<sequence>MRCDRLWRDARLATMAGNGLGIVEDGVVAASEGRILYAGPAADAPAFDPDRAETLDGRWITPGLIDCHTHLVHAGDRAREFELRLAGASYEEIARAGGGIVSTMRATRDADEARLVELALPRLDALIAEGATTVEVKSGYGLTVADELKMLRAARRLGEARPVGIRATLLGAHALPPEYAGDADGYVDLVCREMIPAAAREGLADAVDAFCEGIGFTPAQTQRVFDAARAAGLPVKLHAEQLSNLHGAKLAAEAGALSADHLEHLDADGIAAMARAGTVATLLPGAYYFVRETKLPPVDGLRAAGVPIAIATDCNPGTSPLSSLLLTMNMGATLFRLTVDECLAGVTRNAARALGLQAEIGTLEPGKSCDLAIWDIERPAELVYRIGFNPLHTRIWKGL</sequence>
<protein>
    <recommendedName>
        <fullName evidence="1">Imidazolonepropionase</fullName>
        <ecNumber evidence="1">3.5.2.7</ecNumber>
    </recommendedName>
    <alternativeName>
        <fullName evidence="1">Imidazolone-5-propionate hydrolase</fullName>
    </alternativeName>
</protein>
<dbReference type="EC" id="3.5.2.7" evidence="1"/>
<dbReference type="EMBL" id="CP000699">
    <property type="protein sequence ID" value="ABQ70971.1"/>
    <property type="molecule type" value="Genomic_DNA"/>
</dbReference>
<dbReference type="SMR" id="A5VFA5"/>
<dbReference type="STRING" id="392499.Swit_4633"/>
<dbReference type="PaxDb" id="392499-Swit_4633"/>
<dbReference type="KEGG" id="swi:Swit_4633"/>
<dbReference type="eggNOG" id="COG1228">
    <property type="taxonomic scope" value="Bacteria"/>
</dbReference>
<dbReference type="HOGENOM" id="CLU_041647_0_0_5"/>
<dbReference type="OrthoDB" id="9776455at2"/>
<dbReference type="UniPathway" id="UPA00379">
    <property type="reaction ID" value="UER00551"/>
</dbReference>
<dbReference type="Proteomes" id="UP000001989">
    <property type="component" value="Chromosome"/>
</dbReference>
<dbReference type="GO" id="GO:0005737">
    <property type="term" value="C:cytoplasm"/>
    <property type="evidence" value="ECO:0007669"/>
    <property type="project" value="UniProtKB-SubCell"/>
</dbReference>
<dbReference type="GO" id="GO:0050480">
    <property type="term" value="F:imidazolonepropionase activity"/>
    <property type="evidence" value="ECO:0007669"/>
    <property type="project" value="UniProtKB-UniRule"/>
</dbReference>
<dbReference type="GO" id="GO:0005506">
    <property type="term" value="F:iron ion binding"/>
    <property type="evidence" value="ECO:0007669"/>
    <property type="project" value="UniProtKB-UniRule"/>
</dbReference>
<dbReference type="GO" id="GO:0008270">
    <property type="term" value="F:zinc ion binding"/>
    <property type="evidence" value="ECO:0007669"/>
    <property type="project" value="UniProtKB-UniRule"/>
</dbReference>
<dbReference type="GO" id="GO:0019556">
    <property type="term" value="P:L-histidine catabolic process to glutamate and formamide"/>
    <property type="evidence" value="ECO:0007669"/>
    <property type="project" value="UniProtKB-UniPathway"/>
</dbReference>
<dbReference type="GO" id="GO:0019557">
    <property type="term" value="P:L-histidine catabolic process to glutamate and formate"/>
    <property type="evidence" value="ECO:0007669"/>
    <property type="project" value="UniProtKB-UniPathway"/>
</dbReference>
<dbReference type="CDD" id="cd01296">
    <property type="entry name" value="Imidazolone-5PH"/>
    <property type="match status" value="1"/>
</dbReference>
<dbReference type="FunFam" id="3.20.20.140:FF:000007">
    <property type="entry name" value="Imidazolonepropionase"/>
    <property type="match status" value="1"/>
</dbReference>
<dbReference type="Gene3D" id="3.20.20.140">
    <property type="entry name" value="Metal-dependent hydrolases"/>
    <property type="match status" value="1"/>
</dbReference>
<dbReference type="Gene3D" id="2.30.40.10">
    <property type="entry name" value="Urease, subunit C, domain 1"/>
    <property type="match status" value="1"/>
</dbReference>
<dbReference type="HAMAP" id="MF_00372">
    <property type="entry name" value="HutI"/>
    <property type="match status" value="1"/>
</dbReference>
<dbReference type="InterPro" id="IPR006680">
    <property type="entry name" value="Amidohydro-rel"/>
</dbReference>
<dbReference type="InterPro" id="IPR005920">
    <property type="entry name" value="HutI"/>
</dbReference>
<dbReference type="InterPro" id="IPR011059">
    <property type="entry name" value="Metal-dep_hydrolase_composite"/>
</dbReference>
<dbReference type="InterPro" id="IPR032466">
    <property type="entry name" value="Metal_Hydrolase"/>
</dbReference>
<dbReference type="NCBIfam" id="TIGR01224">
    <property type="entry name" value="hutI"/>
    <property type="match status" value="1"/>
</dbReference>
<dbReference type="PANTHER" id="PTHR42752">
    <property type="entry name" value="IMIDAZOLONEPROPIONASE"/>
    <property type="match status" value="1"/>
</dbReference>
<dbReference type="PANTHER" id="PTHR42752:SF1">
    <property type="entry name" value="IMIDAZOLONEPROPIONASE-RELATED"/>
    <property type="match status" value="1"/>
</dbReference>
<dbReference type="Pfam" id="PF01979">
    <property type="entry name" value="Amidohydro_1"/>
    <property type="match status" value="1"/>
</dbReference>
<dbReference type="SUPFAM" id="SSF51338">
    <property type="entry name" value="Composite domain of metallo-dependent hydrolases"/>
    <property type="match status" value="1"/>
</dbReference>
<dbReference type="SUPFAM" id="SSF51556">
    <property type="entry name" value="Metallo-dependent hydrolases"/>
    <property type="match status" value="1"/>
</dbReference>
<reference key="1">
    <citation type="journal article" date="2010" name="J. Bacteriol.">
        <title>Genome sequence of the dioxin-mineralizing bacterium Sphingomonas wittichii RW1.</title>
        <authorList>
            <person name="Miller T.R."/>
            <person name="Delcher A.L."/>
            <person name="Salzberg S.L."/>
            <person name="Saunders E."/>
            <person name="Detter J.C."/>
            <person name="Halden R.U."/>
        </authorList>
    </citation>
    <scope>NUCLEOTIDE SEQUENCE [LARGE SCALE GENOMIC DNA]</scope>
    <source>
        <strain>DSM 6014 / CCUG 31198 / JCM 15750 / NBRC 105917 / EY 4224 / RW1</strain>
    </source>
</reference>
<keyword id="KW-0963">Cytoplasm</keyword>
<keyword id="KW-0369">Histidine metabolism</keyword>
<keyword id="KW-0378">Hydrolase</keyword>
<keyword id="KW-0408">Iron</keyword>
<keyword id="KW-0479">Metal-binding</keyword>
<keyword id="KW-1185">Reference proteome</keyword>
<keyword id="KW-0862">Zinc</keyword>
<accession>A5VFA5</accession>
<evidence type="ECO:0000255" key="1">
    <source>
        <dbReference type="HAMAP-Rule" id="MF_00372"/>
    </source>
</evidence>
<gene>
    <name evidence="1" type="primary">hutI</name>
    <name type="ordered locus">Swit_4633</name>
</gene>
<comment type="function">
    <text evidence="1">Catalyzes the hydrolytic cleavage of the carbon-nitrogen bond in imidazolone-5-propanoate to yield N-formimidoyl-L-glutamate. It is the third step in the universal histidine degradation pathway.</text>
</comment>
<comment type="catalytic activity">
    <reaction evidence="1">
        <text>4-imidazolone-5-propanoate + H2O = N-formimidoyl-L-glutamate</text>
        <dbReference type="Rhea" id="RHEA:23660"/>
        <dbReference type="ChEBI" id="CHEBI:15377"/>
        <dbReference type="ChEBI" id="CHEBI:58928"/>
        <dbReference type="ChEBI" id="CHEBI:77893"/>
        <dbReference type="EC" id="3.5.2.7"/>
    </reaction>
</comment>
<comment type="cofactor">
    <cofactor evidence="1">
        <name>Zn(2+)</name>
        <dbReference type="ChEBI" id="CHEBI:29105"/>
    </cofactor>
    <cofactor evidence="1">
        <name>Fe(3+)</name>
        <dbReference type="ChEBI" id="CHEBI:29034"/>
    </cofactor>
    <text evidence="1">Binds 1 zinc or iron ion per subunit.</text>
</comment>
<comment type="pathway">
    <text evidence="1">Amino-acid degradation; L-histidine degradation into L-glutamate; N-formimidoyl-L-glutamate from L-histidine: step 3/3.</text>
</comment>
<comment type="subcellular location">
    <subcellularLocation>
        <location evidence="1">Cytoplasm</location>
    </subcellularLocation>
</comment>
<comment type="similarity">
    <text evidence="1">Belongs to the metallo-dependent hydrolases superfamily. HutI family.</text>
</comment>